<gene>
    <name type="ordered locus">lpl2647</name>
</gene>
<sequence length="383" mass="44797">MRLLSFKKSKIVSIGTELEFQIIDCSSLSLVSRSKELMRALKDMRYRDQIKPEITQSMIEINSSIHQSAKEMYDELLELQKILVETAASIDIAFCGGGTHPFQQWTMQKIFPSKRFKKKFNQYRYLSKRATVFGQHIHIGCPTGDDAIYLTHALARYVPHFIAISASSPFYLGINTNYCSSRSTIFNAFPLSGVIPYLRNWQEFSDYYRKMYRWKIIENMKDFYWDIRPKPELGTIEIRVCDTPLTLRKSILITAYIQALALYLLEEKPVELSHDLYYVYNYNRFQASRHGLEGELTVTDKDRPIPIMDDILETIKKIEQYINELGNNEYIEELYSDVINKQNDSVLINKMYKQDGSFSKLVAAQCELWLSDSKDRKWMTQPS</sequence>
<accession>Q5WT78</accession>
<protein>
    <recommendedName>
        <fullName evidence="1">Putative glutamate--cysteine ligase 2-2</fullName>
        <ecNumber evidence="1">6.3.2.2</ecNumber>
    </recommendedName>
    <alternativeName>
        <fullName evidence="1">Gamma-glutamylcysteine synthetase 2-2</fullName>
        <shortName evidence="1">GCS 2-2</shortName>
        <shortName evidence="1">Gamma-GCS 2-2</shortName>
    </alternativeName>
</protein>
<keyword id="KW-0067">ATP-binding</keyword>
<keyword id="KW-0436">Ligase</keyword>
<keyword id="KW-0547">Nucleotide-binding</keyword>
<comment type="function">
    <text evidence="1">ATP-dependent carboxylate-amine ligase which exhibits weak glutamate--cysteine ligase activity.</text>
</comment>
<comment type="catalytic activity">
    <reaction evidence="1">
        <text>L-cysteine + L-glutamate + ATP = gamma-L-glutamyl-L-cysteine + ADP + phosphate + H(+)</text>
        <dbReference type="Rhea" id="RHEA:13285"/>
        <dbReference type="ChEBI" id="CHEBI:15378"/>
        <dbReference type="ChEBI" id="CHEBI:29985"/>
        <dbReference type="ChEBI" id="CHEBI:30616"/>
        <dbReference type="ChEBI" id="CHEBI:35235"/>
        <dbReference type="ChEBI" id="CHEBI:43474"/>
        <dbReference type="ChEBI" id="CHEBI:58173"/>
        <dbReference type="ChEBI" id="CHEBI:456216"/>
        <dbReference type="EC" id="6.3.2.2"/>
    </reaction>
</comment>
<comment type="similarity">
    <text evidence="1">Belongs to the glutamate--cysteine ligase type 2 family. YbdK subfamily.</text>
</comment>
<name>GCS22_LEGPL</name>
<proteinExistence type="inferred from homology"/>
<organism>
    <name type="scientific">Legionella pneumophila (strain Lens)</name>
    <dbReference type="NCBI Taxonomy" id="297245"/>
    <lineage>
        <taxon>Bacteria</taxon>
        <taxon>Pseudomonadati</taxon>
        <taxon>Pseudomonadota</taxon>
        <taxon>Gammaproteobacteria</taxon>
        <taxon>Legionellales</taxon>
        <taxon>Legionellaceae</taxon>
        <taxon>Legionella</taxon>
    </lineage>
</organism>
<dbReference type="EC" id="6.3.2.2" evidence="1"/>
<dbReference type="EMBL" id="CR628337">
    <property type="protein sequence ID" value="CAH16888.1"/>
    <property type="molecule type" value="Genomic_DNA"/>
</dbReference>
<dbReference type="RefSeq" id="WP_011216585.1">
    <property type="nucleotide sequence ID" value="NC_006369.1"/>
</dbReference>
<dbReference type="SMR" id="Q5WT78"/>
<dbReference type="KEGG" id="lpf:lpl2647"/>
<dbReference type="LegioList" id="lpl2647"/>
<dbReference type="HOGENOM" id="CLU_044848_1_1_6"/>
<dbReference type="Proteomes" id="UP000002517">
    <property type="component" value="Chromosome"/>
</dbReference>
<dbReference type="GO" id="GO:0005524">
    <property type="term" value="F:ATP binding"/>
    <property type="evidence" value="ECO:0007669"/>
    <property type="project" value="UniProtKB-KW"/>
</dbReference>
<dbReference type="GO" id="GO:0004357">
    <property type="term" value="F:glutamate-cysteine ligase activity"/>
    <property type="evidence" value="ECO:0007669"/>
    <property type="project" value="UniProtKB-EC"/>
</dbReference>
<dbReference type="GO" id="GO:0042398">
    <property type="term" value="P:modified amino acid biosynthetic process"/>
    <property type="evidence" value="ECO:0007669"/>
    <property type="project" value="InterPro"/>
</dbReference>
<dbReference type="Gene3D" id="3.30.590.20">
    <property type="match status" value="1"/>
</dbReference>
<dbReference type="HAMAP" id="MF_01609">
    <property type="entry name" value="Glu_cys_ligase_2"/>
    <property type="match status" value="1"/>
</dbReference>
<dbReference type="InterPro" id="IPR050141">
    <property type="entry name" value="GCL_type2/YbdK_subfam"/>
</dbReference>
<dbReference type="InterPro" id="IPR006336">
    <property type="entry name" value="GCS2"/>
</dbReference>
<dbReference type="InterPro" id="IPR014746">
    <property type="entry name" value="Gln_synth/guanido_kin_cat_dom"/>
</dbReference>
<dbReference type="InterPro" id="IPR011793">
    <property type="entry name" value="YbdK"/>
</dbReference>
<dbReference type="NCBIfam" id="TIGR02050">
    <property type="entry name" value="gshA_cyan_rel"/>
    <property type="match status" value="1"/>
</dbReference>
<dbReference type="NCBIfam" id="NF010040">
    <property type="entry name" value="PRK13516.1"/>
    <property type="match status" value="1"/>
</dbReference>
<dbReference type="PANTHER" id="PTHR36510">
    <property type="entry name" value="GLUTAMATE--CYSTEINE LIGASE 2-RELATED"/>
    <property type="match status" value="1"/>
</dbReference>
<dbReference type="PANTHER" id="PTHR36510:SF1">
    <property type="entry name" value="GLUTAMATE--CYSTEINE LIGASE 2-RELATED"/>
    <property type="match status" value="1"/>
</dbReference>
<dbReference type="Pfam" id="PF04107">
    <property type="entry name" value="GCS2"/>
    <property type="match status" value="1"/>
</dbReference>
<dbReference type="SUPFAM" id="SSF55931">
    <property type="entry name" value="Glutamine synthetase/guanido kinase"/>
    <property type="match status" value="1"/>
</dbReference>
<reference key="1">
    <citation type="journal article" date="2004" name="Nat. Genet.">
        <title>Evidence in the Legionella pneumophila genome for exploitation of host cell functions and high genome plasticity.</title>
        <authorList>
            <person name="Cazalet C."/>
            <person name="Rusniok C."/>
            <person name="Brueggemann H."/>
            <person name="Zidane N."/>
            <person name="Magnier A."/>
            <person name="Ma L."/>
            <person name="Tichit M."/>
            <person name="Jarraud S."/>
            <person name="Bouchier C."/>
            <person name="Vandenesch F."/>
            <person name="Kunst F."/>
            <person name="Etienne J."/>
            <person name="Glaser P."/>
            <person name="Buchrieser C."/>
        </authorList>
    </citation>
    <scope>NUCLEOTIDE SEQUENCE [LARGE SCALE GENOMIC DNA]</scope>
    <source>
        <strain>Lens</strain>
    </source>
</reference>
<feature type="chain" id="PRO_0000218204" description="Putative glutamate--cysteine ligase 2-2">
    <location>
        <begin position="1"/>
        <end position="383"/>
    </location>
</feature>
<evidence type="ECO:0000255" key="1">
    <source>
        <dbReference type="HAMAP-Rule" id="MF_01609"/>
    </source>
</evidence>